<organismHost>
    <name type="scientific">Aves</name>
    <dbReference type="NCBI Taxonomy" id="8782"/>
</organismHost>
<organismHost>
    <name type="scientific">Felis catus</name>
    <name type="common">Cat</name>
    <name type="synonym">Felis silvestris catus</name>
    <dbReference type="NCBI Taxonomy" id="9685"/>
</organismHost>
<organismHost>
    <name type="scientific">Homo sapiens</name>
    <name type="common">Human</name>
    <dbReference type="NCBI Taxonomy" id="9606"/>
</organismHost>
<organismHost>
    <name type="scientific">Panthera pardus</name>
    <name type="common">Leopard</name>
    <name type="synonym">Felis pardus</name>
    <dbReference type="NCBI Taxonomy" id="9691"/>
</organismHost>
<organismHost>
    <name type="scientific">Panthera tigris</name>
    <name type="common">Tiger</name>
    <dbReference type="NCBI Taxonomy" id="9694"/>
</organismHost>
<organismHost>
    <name type="scientific">Sus scrofa</name>
    <name type="common">Pig</name>
    <dbReference type="NCBI Taxonomy" id="9823"/>
</organismHost>
<dbReference type="EC" id="3.2.1.18" evidence="1"/>
<dbReference type="EMBL" id="AF046081">
    <property type="protein sequence ID" value="AAC32079.1"/>
    <property type="molecule type" value="Genomic_RNA"/>
</dbReference>
<dbReference type="EMBL" id="AF098547">
    <property type="protein sequence ID" value="AAF02310.1"/>
    <property type="molecule type" value="Genomic_RNA"/>
</dbReference>
<dbReference type="SMR" id="Q9WAA1"/>
<dbReference type="CAZy" id="GH34">
    <property type="family name" value="Glycoside Hydrolase Family 34"/>
</dbReference>
<dbReference type="GlyCosmos" id="Q9WAA1">
    <property type="glycosylation" value="4 sites, No reported glycans"/>
</dbReference>
<dbReference type="GO" id="GO:0020002">
    <property type="term" value="C:host cell plasma membrane"/>
    <property type="evidence" value="ECO:0007669"/>
    <property type="project" value="UniProtKB-SubCell"/>
</dbReference>
<dbReference type="GO" id="GO:0016020">
    <property type="term" value="C:membrane"/>
    <property type="evidence" value="ECO:0007669"/>
    <property type="project" value="UniProtKB-UniRule"/>
</dbReference>
<dbReference type="GO" id="GO:0055036">
    <property type="term" value="C:virion membrane"/>
    <property type="evidence" value="ECO:0007669"/>
    <property type="project" value="UniProtKB-SubCell"/>
</dbReference>
<dbReference type="GO" id="GO:0004308">
    <property type="term" value="F:exo-alpha-sialidase activity"/>
    <property type="evidence" value="ECO:0007669"/>
    <property type="project" value="UniProtKB-UniRule"/>
</dbReference>
<dbReference type="GO" id="GO:0046872">
    <property type="term" value="F:metal ion binding"/>
    <property type="evidence" value="ECO:0007669"/>
    <property type="project" value="UniProtKB-UniRule"/>
</dbReference>
<dbReference type="GO" id="GO:0005975">
    <property type="term" value="P:carbohydrate metabolic process"/>
    <property type="evidence" value="ECO:0007669"/>
    <property type="project" value="InterPro"/>
</dbReference>
<dbReference type="GO" id="GO:0046761">
    <property type="term" value="P:viral budding from plasma membrane"/>
    <property type="evidence" value="ECO:0007669"/>
    <property type="project" value="UniProtKB-UniRule"/>
</dbReference>
<dbReference type="CDD" id="cd15483">
    <property type="entry name" value="Influenza_NA"/>
    <property type="match status" value="1"/>
</dbReference>
<dbReference type="FunFam" id="2.120.10.10:FF:000001">
    <property type="entry name" value="Neuraminidase"/>
    <property type="match status" value="1"/>
</dbReference>
<dbReference type="Gene3D" id="2.120.10.10">
    <property type="match status" value="1"/>
</dbReference>
<dbReference type="HAMAP" id="MF_04071">
    <property type="entry name" value="INFV_NRAM"/>
    <property type="match status" value="1"/>
</dbReference>
<dbReference type="InterPro" id="IPR001860">
    <property type="entry name" value="Glyco_hydro_34"/>
</dbReference>
<dbReference type="InterPro" id="IPR033654">
    <property type="entry name" value="Sialidase_Influenza_A/B"/>
</dbReference>
<dbReference type="InterPro" id="IPR036278">
    <property type="entry name" value="Sialidase_sf"/>
</dbReference>
<dbReference type="Pfam" id="PF00064">
    <property type="entry name" value="Neur"/>
    <property type="match status" value="1"/>
</dbReference>
<dbReference type="SUPFAM" id="SSF50939">
    <property type="entry name" value="Sialidases"/>
    <property type="match status" value="1"/>
</dbReference>
<evidence type="ECO:0000255" key="1">
    <source>
        <dbReference type="HAMAP-Rule" id="MF_04071"/>
    </source>
</evidence>
<protein>
    <recommendedName>
        <fullName evidence="1">Neuraminidase</fullName>
        <ecNumber evidence="1">3.2.1.18</ecNumber>
    </recommendedName>
</protein>
<comment type="function">
    <text evidence="1">Catalyzes the removal of terminal sialic acid residues from viral and cellular glycoconjugates. Cleaves off the terminal sialic acids on the glycosylated HA during virus budding to facilitate virus release. Additionally helps virus spread through the circulation by further removing sialic acids from the cell surface. These cleavages prevent self-aggregation and ensure the efficient spread of the progeny virus from cell to cell. Otherwise, infection would be limited to one round of replication. Described as a receptor-destroying enzyme because it cleaves a terminal sialic acid from the cellular receptors. May facilitate viral invasion of the upper airways by cleaving the sialic acid moieties on the mucin of the airway epithelial cells. Likely to plays a role in the budding process through its association with lipid rafts during intracellular transport. May additionally display a raft-association independent effect on budding. Plays a role in the determination of host range restriction on replication and virulence. Sialidase activity in late endosome/lysosome traffic seems to enhance virus replication.</text>
</comment>
<comment type="catalytic activity">
    <reaction evidence="1">
        <text>Hydrolysis of alpha-(2-&gt;3)-, alpha-(2-&gt;6)-, alpha-(2-&gt;8)- glycosidic linkages of terminal sialic acid residues in oligosaccharides, glycoproteins, glycolipids, colominic acid and synthetic substrates.</text>
        <dbReference type="EC" id="3.2.1.18"/>
    </reaction>
</comment>
<comment type="cofactor">
    <cofactor evidence="1">
        <name>Ca(2+)</name>
        <dbReference type="ChEBI" id="CHEBI:29108"/>
    </cofactor>
</comment>
<comment type="activity regulation">
    <text evidence="1">Inhibited by the neuraminidase inhibitors zanamivir (Relenza) and oseltamivir (Tamiflu). These drugs interfere with the release of progeny virus from infected cells and are effective against all influenza strains. Resistance to neuraminidase inhibitors is quite rare.</text>
</comment>
<comment type="subunit">
    <text evidence="1">Homotetramer.</text>
</comment>
<comment type="subcellular location">
    <subcellularLocation>
        <location evidence="1">Virion membrane</location>
    </subcellularLocation>
    <subcellularLocation>
        <location evidence="1">Host apical cell membrane</location>
        <topology evidence="1">Single-pass type II membrane protein</topology>
    </subcellularLocation>
    <text evidence="1">Preferentially accumulates at the apical plasma membrane in infected polarized epithelial cells, which is the virus assembly site. Uses lipid rafts for cell surface transport and apical sorting. In the virion, forms a mushroom-shaped spike on the surface of the membrane.</text>
</comment>
<comment type="domain">
    <text evidence="1">Intact N-terminus is essential for virion morphogenesis. Possesses two apical sorting signals, one in the ectodomain, which is likely to be a glycan, and the other in the transmembrane domain. The transmembrane domain also plays a role in lipid raft association.</text>
</comment>
<comment type="PTM">
    <text evidence="1">N-glycosylated.</text>
</comment>
<comment type="miscellaneous">
    <text>The influenza A genome consist of 8 RNA segments. Genetic variation of hemagglutinin and/or neuraminidase genes results in the emergence of new influenza strains. The mechanism of variation can be the result of point mutations or the result of genetic reassortment between segments of two different strains.</text>
</comment>
<comment type="similarity">
    <text evidence="1">Belongs to the glycosyl hydrolase 34 family.</text>
</comment>
<reference key="1">
    <citation type="journal article" date="1998" name="J. Virol.">
        <title>Comparisons of highly virulent H5N1 influenza A viruses isolated from humans and chickens from Hong Kong.</title>
        <authorList>
            <person name="Suarez D.L."/>
            <person name="Perdue M.L."/>
            <person name="Cox N."/>
            <person name="Rowe T."/>
            <person name="Bender C."/>
            <person name="Huang J."/>
            <person name="Swayne D.E."/>
        </authorList>
    </citation>
    <scope>NUCLEOTIDE SEQUENCE [GENOMIC RNA]</scope>
</reference>
<reference key="2">
    <citation type="journal article" date="1999" name="J. Virol.">
        <title>Rapid evolution of H5N1 influenza viruses in chickens in Hong Kong.</title>
        <authorList>
            <person name="Zhou N.N."/>
            <person name="Shortridge K.F."/>
            <person name="Claas E.C.J."/>
            <person name="Krauss S.L."/>
            <person name="Webster R.G."/>
        </authorList>
    </citation>
    <scope>NUCLEOTIDE SEQUENCE [GENOMIC RNA]</scope>
</reference>
<reference key="3">
    <citation type="journal article" date="2004" name="Virus Res.">
        <title>Assembly and budding of influenza virus.</title>
        <authorList>
            <person name="Nayak D.P."/>
            <person name="Hui E.K."/>
            <person name="Barman S."/>
        </authorList>
    </citation>
    <scope>REVIEW</scope>
</reference>
<reference key="4">
    <citation type="journal article" date="2005" name="N. Engl. J. Med.">
        <title>Neuraminidase inhibitors for influenza.</title>
        <authorList>
            <person name="Moscona A."/>
        </authorList>
    </citation>
    <scope>REVIEW</scope>
</reference>
<reference key="5">
    <citation type="journal article" date="2005" name="Biol. Pharm. Bull.">
        <title>Sialobiology of influenza: molecular mechanism of host range variation of influenza viruses.</title>
        <authorList>
            <person name="Suzuki Y."/>
        </authorList>
    </citation>
    <scope>REVIEW</scope>
</reference>
<name>NRAM_I97A0</name>
<accession>Q9WAA1</accession>
<accession>Q9PZN0</accession>
<organism>
    <name type="scientific">Influenza A virus (strain A/Chicken/Hong Kong/220/1997 H5N1 genotype Gs/Gd)</name>
    <dbReference type="NCBI Taxonomy" id="100834"/>
    <lineage>
        <taxon>Viruses</taxon>
        <taxon>Riboviria</taxon>
        <taxon>Orthornavirae</taxon>
        <taxon>Negarnaviricota</taxon>
        <taxon>Polyploviricotina</taxon>
        <taxon>Insthoviricetes</taxon>
        <taxon>Articulavirales</taxon>
        <taxon>Orthomyxoviridae</taxon>
        <taxon>Alphainfluenzavirus</taxon>
        <taxon>Alphainfluenzavirus influenzae</taxon>
        <taxon>Influenza A virus</taxon>
    </lineage>
</organism>
<gene>
    <name evidence="1" type="primary">NA</name>
</gene>
<keyword id="KW-0106">Calcium</keyword>
<keyword id="KW-1015">Disulfide bond</keyword>
<keyword id="KW-0325">Glycoprotein</keyword>
<keyword id="KW-0326">Glycosidase</keyword>
<keyword id="KW-1032">Host cell membrane</keyword>
<keyword id="KW-1043">Host membrane</keyword>
<keyword id="KW-0378">Hydrolase</keyword>
<keyword id="KW-0472">Membrane</keyword>
<keyword id="KW-0479">Metal-binding</keyword>
<keyword id="KW-0735">Signal-anchor</keyword>
<keyword id="KW-0812">Transmembrane</keyword>
<keyword id="KW-1133">Transmembrane helix</keyword>
<keyword id="KW-0946">Virion</keyword>
<sequence>MNPNQKIITIGSICMVVGIISLMLQIGNIISVWVSHIIQTWHPNQPEPCNQSINFYTEQAAASVTLAGNSSLCPISGWAIYSKDNSIRIGSKGDVFVIREPFISCSHLECRTFFLTQGALLNDKHSNGTVKDRSPYRTLMSCPVGEAPSPYKSRFESVAWSASACHDGISWLTIGISGPDNGAVAVLKYNGIITDTIKSWRNNILRTQESECACVNGSCFTVMTDGPSNEQASYKIFKIEKGRVVKSVELNAPNYHYEECSCYPDAGEITCVCRDNWHGSNRPWVSFNQNLEYQIGYICSGVFGDSPRPNDGTGSCGPVSLNGAYGVKGFSFKYGNGVWIGRTKSTSSRSGFEMIWDPNGWTETDSSFSLKQDIIAITDWSGYSGSFIQHPELTGLNCMRPCFWVELIRGRPKEKTIWTSGSSISFCGVNSDTVGWSWPDGAELPFTIDK</sequence>
<proteinExistence type="inferred from homology"/>
<feature type="chain" id="PRO_0000280123" description="Neuraminidase">
    <location>
        <begin position="1"/>
        <end position="450"/>
    </location>
</feature>
<feature type="topological domain" description="Intravirion" evidence="1">
    <location>
        <begin position="1"/>
        <end position="6"/>
    </location>
</feature>
<feature type="transmembrane region" description="Helical" evidence="1">
    <location>
        <begin position="7"/>
        <end position="27"/>
    </location>
</feature>
<feature type="topological domain" description="Virion surface" evidence="1">
    <location>
        <begin position="28"/>
        <end position="450"/>
    </location>
</feature>
<feature type="region of interest" description="Involved in apical transport and lipid raft association" evidence="1">
    <location>
        <begin position="11"/>
        <end position="33"/>
    </location>
</feature>
<feature type="region of interest" description="Hypervariable stalk region" evidence="1">
    <location>
        <begin position="36"/>
        <end position="71"/>
    </location>
</feature>
<feature type="region of interest" description="Head of neuraminidase" evidence="1">
    <location>
        <begin position="72"/>
        <end position="450"/>
    </location>
</feature>
<feature type="active site" description="Proton donor/acceptor" evidence="1">
    <location>
        <position position="132"/>
    </location>
</feature>
<feature type="active site" description="Nucleophile" evidence="1">
    <location>
        <position position="383"/>
    </location>
</feature>
<feature type="binding site" evidence="1">
    <location>
        <position position="99"/>
    </location>
    <ligand>
        <name>substrate</name>
    </ligand>
</feature>
<feature type="binding site" evidence="1">
    <location>
        <position position="133"/>
    </location>
    <ligand>
        <name>substrate</name>
    </ligand>
</feature>
<feature type="binding site" evidence="1">
    <location>
        <begin position="258"/>
        <end position="259"/>
    </location>
    <ligand>
        <name>substrate</name>
    </ligand>
</feature>
<feature type="binding site" evidence="1">
    <location>
        <position position="274"/>
    </location>
    <ligand>
        <name>substrate</name>
    </ligand>
</feature>
<feature type="binding site" evidence="1">
    <location>
        <position position="275"/>
    </location>
    <ligand>
        <name>Ca(2+)</name>
        <dbReference type="ChEBI" id="CHEBI:29108"/>
    </ligand>
</feature>
<feature type="binding site" evidence="1">
    <location>
        <position position="279"/>
    </location>
    <ligand>
        <name>Ca(2+)</name>
        <dbReference type="ChEBI" id="CHEBI:29108"/>
    </ligand>
</feature>
<feature type="binding site" evidence="1">
    <location>
        <position position="305"/>
    </location>
    <ligand>
        <name>Ca(2+)</name>
        <dbReference type="ChEBI" id="CHEBI:29108"/>
    </ligand>
</feature>
<feature type="binding site" evidence="1">
    <location>
        <position position="349"/>
    </location>
    <ligand>
        <name>substrate</name>
    </ligand>
</feature>
<feature type="glycosylation site" description="N-linked (GlcNAc...) asparagine; by host" evidence="1">
    <location>
        <position position="50"/>
    </location>
</feature>
<feature type="glycosylation site" description="N-linked (GlcNAc...) asparagine; by host" evidence="1">
    <location>
        <position position="69"/>
    </location>
</feature>
<feature type="glycosylation site" description="N-linked (GlcNAc...) asparagine; by host" evidence="1">
    <location>
        <position position="127"/>
    </location>
</feature>
<feature type="glycosylation site" description="N-linked (GlcNAc...) asparagine; by host" evidence="1">
    <location>
        <position position="216"/>
    </location>
</feature>
<feature type="disulfide bond" evidence="1">
    <location>
        <begin position="73"/>
        <end position="398"/>
    </location>
</feature>
<feature type="disulfide bond" evidence="1">
    <location>
        <begin position="105"/>
        <end position="110"/>
    </location>
</feature>
<feature type="disulfide bond" evidence="1">
    <location>
        <begin position="165"/>
        <end position="212"/>
    </location>
</feature>
<feature type="disulfide bond" evidence="1">
    <location>
        <begin position="214"/>
        <end position="219"/>
    </location>
</feature>
<feature type="disulfide bond" evidence="1">
    <location>
        <begin position="260"/>
        <end position="273"/>
    </location>
</feature>
<feature type="disulfide bond" evidence="1">
    <location>
        <begin position="262"/>
        <end position="271"/>
    </location>
</feature>
<feature type="disulfide bond" evidence="1">
    <location>
        <begin position="299"/>
        <end position="316"/>
    </location>
</feature>
<feature type="disulfide bond" evidence="1">
    <location>
        <begin position="402"/>
        <end position="427"/>
    </location>
</feature>
<feature type="sequence variant">
    <original>K</original>
    <variation>N</variation>
    <location>
        <position position="152"/>
    </location>
</feature>